<sequence length="43" mass="5322">MKQSKKKPSQKQHERLDRFWQQMMNTNMQTLRRGKGGAYKRRK</sequence>
<gene>
    <name type="primary">yjzF</name>
    <name type="ordered locus">BSU11928</name>
</gene>
<reference key="1">
    <citation type="journal article" date="1997" name="Nature">
        <title>The complete genome sequence of the Gram-positive bacterium Bacillus subtilis.</title>
        <authorList>
            <person name="Kunst F."/>
            <person name="Ogasawara N."/>
            <person name="Moszer I."/>
            <person name="Albertini A.M."/>
            <person name="Alloni G."/>
            <person name="Azevedo V."/>
            <person name="Bertero M.G."/>
            <person name="Bessieres P."/>
            <person name="Bolotin A."/>
            <person name="Borchert S."/>
            <person name="Borriss R."/>
            <person name="Boursier L."/>
            <person name="Brans A."/>
            <person name="Braun M."/>
            <person name="Brignell S.C."/>
            <person name="Bron S."/>
            <person name="Brouillet S."/>
            <person name="Bruschi C.V."/>
            <person name="Caldwell B."/>
            <person name="Capuano V."/>
            <person name="Carter N.M."/>
            <person name="Choi S.-K."/>
            <person name="Codani J.-J."/>
            <person name="Connerton I.F."/>
            <person name="Cummings N.J."/>
            <person name="Daniel R.A."/>
            <person name="Denizot F."/>
            <person name="Devine K.M."/>
            <person name="Duesterhoeft A."/>
            <person name="Ehrlich S.D."/>
            <person name="Emmerson P.T."/>
            <person name="Entian K.-D."/>
            <person name="Errington J."/>
            <person name="Fabret C."/>
            <person name="Ferrari E."/>
            <person name="Foulger D."/>
            <person name="Fritz C."/>
            <person name="Fujita M."/>
            <person name="Fujita Y."/>
            <person name="Fuma S."/>
            <person name="Galizzi A."/>
            <person name="Galleron N."/>
            <person name="Ghim S.-Y."/>
            <person name="Glaser P."/>
            <person name="Goffeau A."/>
            <person name="Golightly E.J."/>
            <person name="Grandi G."/>
            <person name="Guiseppi G."/>
            <person name="Guy B.J."/>
            <person name="Haga K."/>
            <person name="Haiech J."/>
            <person name="Harwood C.R."/>
            <person name="Henaut A."/>
            <person name="Hilbert H."/>
            <person name="Holsappel S."/>
            <person name="Hosono S."/>
            <person name="Hullo M.-F."/>
            <person name="Itaya M."/>
            <person name="Jones L.-M."/>
            <person name="Joris B."/>
            <person name="Karamata D."/>
            <person name="Kasahara Y."/>
            <person name="Klaerr-Blanchard M."/>
            <person name="Klein C."/>
            <person name="Kobayashi Y."/>
            <person name="Koetter P."/>
            <person name="Koningstein G."/>
            <person name="Krogh S."/>
            <person name="Kumano M."/>
            <person name="Kurita K."/>
            <person name="Lapidus A."/>
            <person name="Lardinois S."/>
            <person name="Lauber J."/>
            <person name="Lazarevic V."/>
            <person name="Lee S.-M."/>
            <person name="Levine A."/>
            <person name="Liu H."/>
            <person name="Masuda S."/>
            <person name="Mauel C."/>
            <person name="Medigue C."/>
            <person name="Medina N."/>
            <person name="Mellado R.P."/>
            <person name="Mizuno M."/>
            <person name="Moestl D."/>
            <person name="Nakai S."/>
            <person name="Noback M."/>
            <person name="Noone D."/>
            <person name="O'Reilly M."/>
            <person name="Ogawa K."/>
            <person name="Ogiwara A."/>
            <person name="Oudega B."/>
            <person name="Park S.-H."/>
            <person name="Parro V."/>
            <person name="Pohl T.M."/>
            <person name="Portetelle D."/>
            <person name="Porwollik S."/>
            <person name="Prescott A.M."/>
            <person name="Presecan E."/>
            <person name="Pujic P."/>
            <person name="Purnelle B."/>
            <person name="Rapoport G."/>
            <person name="Rey M."/>
            <person name="Reynolds S."/>
            <person name="Rieger M."/>
            <person name="Rivolta C."/>
            <person name="Rocha E."/>
            <person name="Roche B."/>
            <person name="Rose M."/>
            <person name="Sadaie Y."/>
            <person name="Sato T."/>
            <person name="Scanlan E."/>
            <person name="Schleich S."/>
            <person name="Schroeter R."/>
            <person name="Scoffone F."/>
            <person name="Sekiguchi J."/>
            <person name="Sekowska A."/>
            <person name="Seror S.J."/>
            <person name="Serror P."/>
            <person name="Shin B.-S."/>
            <person name="Soldo B."/>
            <person name="Sorokin A."/>
            <person name="Tacconi E."/>
            <person name="Takagi T."/>
            <person name="Takahashi H."/>
            <person name="Takemaru K."/>
            <person name="Takeuchi M."/>
            <person name="Tamakoshi A."/>
            <person name="Tanaka T."/>
            <person name="Terpstra P."/>
            <person name="Tognoni A."/>
            <person name="Tosato V."/>
            <person name="Uchiyama S."/>
            <person name="Vandenbol M."/>
            <person name="Vannier F."/>
            <person name="Vassarotti A."/>
            <person name="Viari A."/>
            <person name="Wambutt R."/>
            <person name="Wedler E."/>
            <person name="Wedler H."/>
            <person name="Weitzenegger T."/>
            <person name="Winters P."/>
            <person name="Wipat A."/>
            <person name="Yamamoto H."/>
            <person name="Yamane K."/>
            <person name="Yasumoto K."/>
            <person name="Yata K."/>
            <person name="Yoshida K."/>
            <person name="Yoshikawa H.-F."/>
            <person name="Zumstein E."/>
            <person name="Yoshikawa H."/>
            <person name="Danchin A."/>
        </authorList>
    </citation>
    <scope>NUCLEOTIDE SEQUENCE [LARGE SCALE GENOMIC DNA]</scope>
    <source>
        <strain>168</strain>
    </source>
</reference>
<keyword id="KW-1185">Reference proteome</keyword>
<accession>C0H3Z0</accession>
<protein>
    <recommendedName>
        <fullName>Uncharacterized protein YjzF</fullName>
    </recommendedName>
</protein>
<feature type="chain" id="PRO_0000380079" description="Uncharacterized protein YjzF">
    <location>
        <begin position="1"/>
        <end position="43"/>
    </location>
</feature>
<name>YJZF_BACSU</name>
<proteinExistence type="predicted"/>
<dbReference type="EMBL" id="AL009126">
    <property type="protein sequence ID" value="CAX52597.1"/>
    <property type="molecule type" value="Genomic_DNA"/>
</dbReference>
<dbReference type="RefSeq" id="WP_009967026.1">
    <property type="nucleotide sequence ID" value="NZ_OZ025638.1"/>
</dbReference>
<dbReference type="RefSeq" id="YP_003097707.1">
    <property type="nucleotide sequence ID" value="NC_000964.3"/>
</dbReference>
<dbReference type="FunCoup" id="C0H3Z0">
    <property type="interactions" value="2"/>
</dbReference>
<dbReference type="STRING" id="224308.BSU11928"/>
<dbReference type="PaxDb" id="224308-BSU11928"/>
<dbReference type="EnsemblBacteria" id="CAX52597">
    <property type="protein sequence ID" value="CAX52597"/>
    <property type="gene ID" value="BSU_11928"/>
</dbReference>
<dbReference type="GeneID" id="8303198"/>
<dbReference type="KEGG" id="bsu:BSU11928"/>
<dbReference type="PATRIC" id="fig|224308.179.peg.1286"/>
<dbReference type="InParanoid" id="C0H3Z0"/>
<dbReference type="BioCyc" id="BSUB:BSU11928-MONOMER"/>
<dbReference type="Proteomes" id="UP000001570">
    <property type="component" value="Chromosome"/>
</dbReference>
<organism>
    <name type="scientific">Bacillus subtilis (strain 168)</name>
    <dbReference type="NCBI Taxonomy" id="224308"/>
    <lineage>
        <taxon>Bacteria</taxon>
        <taxon>Bacillati</taxon>
        <taxon>Bacillota</taxon>
        <taxon>Bacilli</taxon>
        <taxon>Bacillales</taxon>
        <taxon>Bacillaceae</taxon>
        <taxon>Bacillus</taxon>
    </lineage>
</organism>